<accession>B0SAR6</accession>
<reference key="1">
    <citation type="journal article" date="2008" name="PLoS ONE">
        <title>Genome sequence of the saprophyte Leptospira biflexa provides insights into the evolution of Leptospira and the pathogenesis of leptospirosis.</title>
        <authorList>
            <person name="Picardeau M."/>
            <person name="Bulach D.M."/>
            <person name="Bouchier C."/>
            <person name="Zuerner R.L."/>
            <person name="Zidane N."/>
            <person name="Wilson P.J."/>
            <person name="Creno S."/>
            <person name="Kuczek E.S."/>
            <person name="Bommezzadri S."/>
            <person name="Davis J.C."/>
            <person name="McGrath A."/>
            <person name="Johnson M.J."/>
            <person name="Boursaux-Eude C."/>
            <person name="Seemann T."/>
            <person name="Rouy Z."/>
            <person name="Coppel R.L."/>
            <person name="Rood J.I."/>
            <person name="Lajus A."/>
            <person name="Davies J.K."/>
            <person name="Medigue C."/>
            <person name="Adler B."/>
        </authorList>
    </citation>
    <scope>NUCLEOTIDE SEQUENCE [LARGE SCALE GENOMIC DNA]</scope>
    <source>
        <strain>Patoc 1 / Ames</strain>
    </source>
</reference>
<dbReference type="EC" id="6.1.1.20" evidence="1"/>
<dbReference type="EMBL" id="CP000777">
    <property type="protein sequence ID" value="ABZ92843.1"/>
    <property type="molecule type" value="Genomic_DNA"/>
</dbReference>
<dbReference type="RefSeq" id="WP_012387338.1">
    <property type="nucleotide sequence ID" value="NC_010842.1"/>
</dbReference>
<dbReference type="SMR" id="B0SAR6"/>
<dbReference type="KEGG" id="lbf:LBF_0297"/>
<dbReference type="HOGENOM" id="CLU_016891_0_0_12"/>
<dbReference type="GO" id="GO:0009328">
    <property type="term" value="C:phenylalanine-tRNA ligase complex"/>
    <property type="evidence" value="ECO:0007669"/>
    <property type="project" value="TreeGrafter"/>
</dbReference>
<dbReference type="GO" id="GO:0005524">
    <property type="term" value="F:ATP binding"/>
    <property type="evidence" value="ECO:0007669"/>
    <property type="project" value="UniProtKB-UniRule"/>
</dbReference>
<dbReference type="GO" id="GO:0000287">
    <property type="term" value="F:magnesium ion binding"/>
    <property type="evidence" value="ECO:0007669"/>
    <property type="project" value="UniProtKB-UniRule"/>
</dbReference>
<dbReference type="GO" id="GO:0004826">
    <property type="term" value="F:phenylalanine-tRNA ligase activity"/>
    <property type="evidence" value="ECO:0007669"/>
    <property type="project" value="UniProtKB-UniRule"/>
</dbReference>
<dbReference type="GO" id="GO:0000049">
    <property type="term" value="F:tRNA binding"/>
    <property type="evidence" value="ECO:0007669"/>
    <property type="project" value="UniProtKB-KW"/>
</dbReference>
<dbReference type="GO" id="GO:0006432">
    <property type="term" value="P:phenylalanyl-tRNA aminoacylation"/>
    <property type="evidence" value="ECO:0007669"/>
    <property type="project" value="UniProtKB-UniRule"/>
</dbReference>
<dbReference type="CDD" id="cd02796">
    <property type="entry name" value="tRNA_bind_bactPheRS"/>
    <property type="match status" value="1"/>
</dbReference>
<dbReference type="Gene3D" id="3.30.56.10">
    <property type="match status" value="2"/>
</dbReference>
<dbReference type="Gene3D" id="3.30.930.10">
    <property type="entry name" value="Bira Bifunctional Protein, Domain 2"/>
    <property type="match status" value="1"/>
</dbReference>
<dbReference type="Gene3D" id="3.30.70.380">
    <property type="entry name" value="Ferrodoxin-fold anticodon-binding domain"/>
    <property type="match status" value="1"/>
</dbReference>
<dbReference type="Gene3D" id="2.40.50.140">
    <property type="entry name" value="Nucleic acid-binding proteins"/>
    <property type="match status" value="1"/>
</dbReference>
<dbReference type="Gene3D" id="3.50.40.10">
    <property type="entry name" value="Phenylalanyl-trna Synthetase, Chain B, domain 3"/>
    <property type="match status" value="1"/>
</dbReference>
<dbReference type="HAMAP" id="MF_00283">
    <property type="entry name" value="Phe_tRNA_synth_beta1"/>
    <property type="match status" value="1"/>
</dbReference>
<dbReference type="InterPro" id="IPR045864">
    <property type="entry name" value="aa-tRNA-synth_II/BPL/LPL"/>
</dbReference>
<dbReference type="InterPro" id="IPR005146">
    <property type="entry name" value="B3/B4_tRNA-bd"/>
</dbReference>
<dbReference type="InterPro" id="IPR009061">
    <property type="entry name" value="DNA-bd_dom_put_sf"/>
</dbReference>
<dbReference type="InterPro" id="IPR005121">
    <property type="entry name" value="Fdx_antiC-bd"/>
</dbReference>
<dbReference type="InterPro" id="IPR036690">
    <property type="entry name" value="Fdx_antiC-bd_sf"/>
</dbReference>
<dbReference type="InterPro" id="IPR012340">
    <property type="entry name" value="NA-bd_OB-fold"/>
</dbReference>
<dbReference type="InterPro" id="IPR045060">
    <property type="entry name" value="Phe-tRNA-ligase_IIc_bsu"/>
</dbReference>
<dbReference type="InterPro" id="IPR004532">
    <property type="entry name" value="Phe-tRNA-ligase_IIc_bsu_bact"/>
</dbReference>
<dbReference type="InterPro" id="IPR020825">
    <property type="entry name" value="Phe-tRNA_synthase-like_B3/B4"/>
</dbReference>
<dbReference type="InterPro" id="IPR041616">
    <property type="entry name" value="PheRS_beta_core"/>
</dbReference>
<dbReference type="InterPro" id="IPR002547">
    <property type="entry name" value="tRNA-bd_dom"/>
</dbReference>
<dbReference type="InterPro" id="IPR033714">
    <property type="entry name" value="tRNA_bind_bactPheRS"/>
</dbReference>
<dbReference type="InterPro" id="IPR005147">
    <property type="entry name" value="tRNA_synthase_B5-dom"/>
</dbReference>
<dbReference type="NCBIfam" id="TIGR00472">
    <property type="entry name" value="pheT_bact"/>
    <property type="match status" value="1"/>
</dbReference>
<dbReference type="PANTHER" id="PTHR10947:SF0">
    <property type="entry name" value="PHENYLALANINE--TRNA LIGASE BETA SUBUNIT"/>
    <property type="match status" value="1"/>
</dbReference>
<dbReference type="PANTHER" id="PTHR10947">
    <property type="entry name" value="PHENYLALANYL-TRNA SYNTHETASE BETA CHAIN AND LEUCINE-RICH REPEAT-CONTAINING PROTEIN 47"/>
    <property type="match status" value="1"/>
</dbReference>
<dbReference type="Pfam" id="PF03483">
    <property type="entry name" value="B3_4"/>
    <property type="match status" value="1"/>
</dbReference>
<dbReference type="Pfam" id="PF03484">
    <property type="entry name" value="B5"/>
    <property type="match status" value="1"/>
</dbReference>
<dbReference type="Pfam" id="PF03147">
    <property type="entry name" value="FDX-ACB"/>
    <property type="match status" value="1"/>
</dbReference>
<dbReference type="Pfam" id="PF01588">
    <property type="entry name" value="tRNA_bind"/>
    <property type="match status" value="1"/>
</dbReference>
<dbReference type="Pfam" id="PF17759">
    <property type="entry name" value="tRNA_synthFbeta"/>
    <property type="match status" value="1"/>
</dbReference>
<dbReference type="SMART" id="SM00873">
    <property type="entry name" value="B3_4"/>
    <property type="match status" value="1"/>
</dbReference>
<dbReference type="SMART" id="SM00874">
    <property type="entry name" value="B5"/>
    <property type="match status" value="1"/>
</dbReference>
<dbReference type="SMART" id="SM00896">
    <property type="entry name" value="FDX-ACB"/>
    <property type="match status" value="1"/>
</dbReference>
<dbReference type="SUPFAM" id="SSF54991">
    <property type="entry name" value="Anticodon-binding domain of PheRS"/>
    <property type="match status" value="1"/>
</dbReference>
<dbReference type="SUPFAM" id="SSF55681">
    <property type="entry name" value="Class II aaRS and biotin synthetases"/>
    <property type="match status" value="1"/>
</dbReference>
<dbReference type="SUPFAM" id="SSF50249">
    <property type="entry name" value="Nucleic acid-binding proteins"/>
    <property type="match status" value="1"/>
</dbReference>
<dbReference type="SUPFAM" id="SSF56037">
    <property type="entry name" value="PheT/TilS domain"/>
    <property type="match status" value="1"/>
</dbReference>
<dbReference type="SUPFAM" id="SSF46955">
    <property type="entry name" value="Putative DNA-binding domain"/>
    <property type="match status" value="1"/>
</dbReference>
<dbReference type="PROSITE" id="PS51483">
    <property type="entry name" value="B5"/>
    <property type="match status" value="1"/>
</dbReference>
<dbReference type="PROSITE" id="PS51447">
    <property type="entry name" value="FDX_ACB"/>
    <property type="match status" value="1"/>
</dbReference>
<dbReference type="PROSITE" id="PS50886">
    <property type="entry name" value="TRBD"/>
    <property type="match status" value="1"/>
</dbReference>
<comment type="catalytic activity">
    <reaction evidence="1">
        <text>tRNA(Phe) + L-phenylalanine + ATP = L-phenylalanyl-tRNA(Phe) + AMP + diphosphate + H(+)</text>
        <dbReference type="Rhea" id="RHEA:19413"/>
        <dbReference type="Rhea" id="RHEA-COMP:9668"/>
        <dbReference type="Rhea" id="RHEA-COMP:9699"/>
        <dbReference type="ChEBI" id="CHEBI:15378"/>
        <dbReference type="ChEBI" id="CHEBI:30616"/>
        <dbReference type="ChEBI" id="CHEBI:33019"/>
        <dbReference type="ChEBI" id="CHEBI:58095"/>
        <dbReference type="ChEBI" id="CHEBI:78442"/>
        <dbReference type="ChEBI" id="CHEBI:78531"/>
        <dbReference type="ChEBI" id="CHEBI:456215"/>
        <dbReference type="EC" id="6.1.1.20"/>
    </reaction>
</comment>
<comment type="cofactor">
    <cofactor evidence="1">
        <name>Mg(2+)</name>
        <dbReference type="ChEBI" id="CHEBI:18420"/>
    </cofactor>
    <text evidence="1">Binds 2 magnesium ions per tetramer.</text>
</comment>
<comment type="subunit">
    <text evidence="1">Tetramer of two alpha and two beta subunits.</text>
</comment>
<comment type="subcellular location">
    <subcellularLocation>
        <location evidence="1">Cytoplasm</location>
    </subcellularLocation>
</comment>
<comment type="similarity">
    <text evidence="1">Belongs to the phenylalanyl-tRNA synthetase beta subunit family. Type 1 subfamily.</text>
</comment>
<evidence type="ECO:0000255" key="1">
    <source>
        <dbReference type="HAMAP-Rule" id="MF_00283"/>
    </source>
</evidence>
<feature type="chain" id="PRO_1000114938" description="Phenylalanine--tRNA ligase beta subunit">
    <location>
        <begin position="1"/>
        <end position="799"/>
    </location>
</feature>
<feature type="domain" description="tRNA-binding" evidence="1">
    <location>
        <begin position="40"/>
        <end position="147"/>
    </location>
</feature>
<feature type="domain" description="B5" evidence="1">
    <location>
        <begin position="402"/>
        <end position="479"/>
    </location>
</feature>
<feature type="domain" description="FDX-ACB" evidence="1">
    <location>
        <begin position="707"/>
        <end position="799"/>
    </location>
</feature>
<feature type="binding site" evidence="1">
    <location>
        <position position="457"/>
    </location>
    <ligand>
        <name>Mg(2+)</name>
        <dbReference type="ChEBI" id="CHEBI:18420"/>
        <note>shared with alpha subunit</note>
    </ligand>
</feature>
<feature type="binding site" evidence="1">
    <location>
        <position position="463"/>
    </location>
    <ligand>
        <name>Mg(2+)</name>
        <dbReference type="ChEBI" id="CHEBI:18420"/>
        <note>shared with alpha subunit</note>
    </ligand>
</feature>
<feature type="binding site" evidence="1">
    <location>
        <position position="466"/>
    </location>
    <ligand>
        <name>Mg(2+)</name>
        <dbReference type="ChEBI" id="CHEBI:18420"/>
        <note>shared with alpha subunit</note>
    </ligand>
</feature>
<feature type="binding site" evidence="1">
    <location>
        <position position="467"/>
    </location>
    <ligand>
        <name>Mg(2+)</name>
        <dbReference type="ChEBI" id="CHEBI:18420"/>
        <note>shared with alpha subunit</note>
    </ligand>
</feature>
<organism>
    <name type="scientific">Leptospira biflexa serovar Patoc (strain Patoc 1 / Ames)</name>
    <dbReference type="NCBI Taxonomy" id="355278"/>
    <lineage>
        <taxon>Bacteria</taxon>
        <taxon>Pseudomonadati</taxon>
        <taxon>Spirochaetota</taxon>
        <taxon>Spirochaetia</taxon>
        <taxon>Leptospirales</taxon>
        <taxon>Leptospiraceae</taxon>
        <taxon>Leptospira</taxon>
    </lineage>
</organism>
<name>SYFB_LEPBA</name>
<protein>
    <recommendedName>
        <fullName evidence="1">Phenylalanine--tRNA ligase beta subunit</fullName>
        <ecNumber evidence="1">6.1.1.20</ecNumber>
    </recommendedName>
    <alternativeName>
        <fullName evidence="1">Phenylalanyl-tRNA synthetase beta subunit</fullName>
        <shortName evidence="1">PheRS</shortName>
    </alternativeName>
</protein>
<keyword id="KW-0030">Aminoacyl-tRNA synthetase</keyword>
<keyword id="KW-0067">ATP-binding</keyword>
<keyword id="KW-0963">Cytoplasm</keyword>
<keyword id="KW-0436">Ligase</keyword>
<keyword id="KW-0460">Magnesium</keyword>
<keyword id="KW-0479">Metal-binding</keyword>
<keyword id="KW-0547">Nucleotide-binding</keyword>
<keyword id="KW-0648">Protein biosynthesis</keyword>
<keyword id="KW-0694">RNA-binding</keyword>
<keyword id="KW-0820">tRNA-binding</keyword>
<gene>
    <name evidence="1" type="primary">pheT</name>
    <name type="ordered locus">LBF_0297</name>
</gene>
<proteinExistence type="inferred from homology"/>
<sequence length="799" mass="90740">MKLSVDWLNEFTPLSQIPFEKVLEKINTSICEIDDVEEFKSHLSSVITVKIKSLEKHPNAEKLQTTIATDGSKEYQIVTAATNVAVGDIVPLALPGTKLDGKEILDSELRGVRSQGMYCSEKELGMALESSGVLILPKDTTLGISVRKYFLWEDTILTIDNKSITHRPDLWNHFGFARELASQLQIPLHHFPLQADTKWESGNQGLTVEKSEHAHAYYVCSIQNVNITESIPKIKSRLEKCGIRSINNVVDVSNYLLLELGQPTHFFDRSKLQSTSFTVSKSKEGESISLLDDTSPTLPNHILLIQNGETPVALAGVMGGKDSAVSESTKEIVMESAVFKREDVRYTIRKTNIRTESAVRYEKGLDSYTCLPVMKRAVQLLKENGNPNVKVFEPQGFNHTESKTVTIETNLSFLRHKLGKKISLHEVTDILQRLGFEVTTKDESLSVLVPKYRQNYDVTIPEDLVEEIGRTIGYASIRTEALSMAVETPIRNPLRELERRVKQFLALEVGFNEVYNYSFASPTDAKLEKEFEVTSLKIANEMPEEHSLLRNSLYPGLIKQTKVNQDRFEKVNLFELGRTYHKEGNDATLAQEKRWISLLSLSKCKPTDLSSIEDEFLTVRETISELFLFLNLPKFEWVKLPRTHFHPNASLVLLYDGKEVVELGILHTRFADLYDLKRRAILSKIDMEVLVQIWETYGRNSHFVPPSHFPQGQLDLSLIMNESDPTESFANLVKTLRIPELESVFVQTIFQGESVGEGKKSVTYRFILMSYDKTFTQDRFKELSDRLVETAKSNGYSLR</sequence>